<protein>
    <recommendedName>
        <fullName evidence="1">Ribose-5-phosphate isomerase A</fullName>
        <ecNumber evidence="1">5.3.1.6</ecNumber>
    </recommendedName>
    <alternativeName>
        <fullName evidence="1">Phosphoriboisomerase A</fullName>
        <shortName evidence="1">PRI</shortName>
    </alternativeName>
</protein>
<evidence type="ECO:0000255" key="1">
    <source>
        <dbReference type="HAMAP-Rule" id="MF_00170"/>
    </source>
</evidence>
<organism>
    <name type="scientific">Legionella pneumophila (strain Lens)</name>
    <dbReference type="NCBI Taxonomy" id="297245"/>
    <lineage>
        <taxon>Bacteria</taxon>
        <taxon>Pseudomonadati</taxon>
        <taxon>Pseudomonadota</taxon>
        <taxon>Gammaproteobacteria</taxon>
        <taxon>Legionellales</taxon>
        <taxon>Legionellaceae</taxon>
        <taxon>Legionella</taxon>
    </lineage>
</organism>
<dbReference type="EC" id="5.3.1.6" evidence="1"/>
<dbReference type="EMBL" id="CR628337">
    <property type="protein sequence ID" value="CAH14323.1"/>
    <property type="molecule type" value="Genomic_DNA"/>
</dbReference>
<dbReference type="RefSeq" id="WP_011214381.1">
    <property type="nucleotide sequence ID" value="NC_006369.1"/>
</dbReference>
<dbReference type="SMR" id="Q5X0C7"/>
<dbReference type="KEGG" id="lpf:lpl0093"/>
<dbReference type="LegioList" id="lpl0093"/>
<dbReference type="HOGENOM" id="CLU_056590_1_1_6"/>
<dbReference type="UniPathway" id="UPA00115">
    <property type="reaction ID" value="UER00412"/>
</dbReference>
<dbReference type="Proteomes" id="UP000002517">
    <property type="component" value="Chromosome"/>
</dbReference>
<dbReference type="GO" id="GO:0005829">
    <property type="term" value="C:cytosol"/>
    <property type="evidence" value="ECO:0007669"/>
    <property type="project" value="TreeGrafter"/>
</dbReference>
<dbReference type="GO" id="GO:0004751">
    <property type="term" value="F:ribose-5-phosphate isomerase activity"/>
    <property type="evidence" value="ECO:0007669"/>
    <property type="project" value="UniProtKB-UniRule"/>
</dbReference>
<dbReference type="GO" id="GO:0006014">
    <property type="term" value="P:D-ribose metabolic process"/>
    <property type="evidence" value="ECO:0007669"/>
    <property type="project" value="TreeGrafter"/>
</dbReference>
<dbReference type="GO" id="GO:0009052">
    <property type="term" value="P:pentose-phosphate shunt, non-oxidative branch"/>
    <property type="evidence" value="ECO:0007669"/>
    <property type="project" value="UniProtKB-UniRule"/>
</dbReference>
<dbReference type="CDD" id="cd01398">
    <property type="entry name" value="RPI_A"/>
    <property type="match status" value="1"/>
</dbReference>
<dbReference type="FunFam" id="3.30.70.260:FF:000004">
    <property type="entry name" value="Ribose-5-phosphate isomerase A"/>
    <property type="match status" value="1"/>
</dbReference>
<dbReference type="FunFam" id="3.40.50.1360:FF:000001">
    <property type="entry name" value="Ribose-5-phosphate isomerase A"/>
    <property type="match status" value="1"/>
</dbReference>
<dbReference type="Gene3D" id="3.30.70.260">
    <property type="match status" value="1"/>
</dbReference>
<dbReference type="Gene3D" id="3.40.50.1360">
    <property type="match status" value="1"/>
</dbReference>
<dbReference type="HAMAP" id="MF_00170">
    <property type="entry name" value="Rib_5P_isom_A"/>
    <property type="match status" value="1"/>
</dbReference>
<dbReference type="InterPro" id="IPR037171">
    <property type="entry name" value="NagB/RpiA_transferase-like"/>
</dbReference>
<dbReference type="InterPro" id="IPR020672">
    <property type="entry name" value="Ribose5P_isomerase_typA_subgr"/>
</dbReference>
<dbReference type="InterPro" id="IPR004788">
    <property type="entry name" value="Ribose5P_isomerase_type_A"/>
</dbReference>
<dbReference type="NCBIfam" id="NF001924">
    <property type="entry name" value="PRK00702.1"/>
    <property type="match status" value="1"/>
</dbReference>
<dbReference type="NCBIfam" id="TIGR00021">
    <property type="entry name" value="rpiA"/>
    <property type="match status" value="1"/>
</dbReference>
<dbReference type="PANTHER" id="PTHR11934">
    <property type="entry name" value="RIBOSE-5-PHOSPHATE ISOMERASE"/>
    <property type="match status" value="1"/>
</dbReference>
<dbReference type="PANTHER" id="PTHR11934:SF0">
    <property type="entry name" value="RIBOSE-5-PHOSPHATE ISOMERASE"/>
    <property type="match status" value="1"/>
</dbReference>
<dbReference type="Pfam" id="PF06026">
    <property type="entry name" value="Rib_5-P_isom_A"/>
    <property type="match status" value="1"/>
</dbReference>
<dbReference type="SUPFAM" id="SSF75445">
    <property type="entry name" value="D-ribose-5-phosphate isomerase (RpiA), lid domain"/>
    <property type="match status" value="1"/>
</dbReference>
<dbReference type="SUPFAM" id="SSF100950">
    <property type="entry name" value="NagB/RpiA/CoA transferase-like"/>
    <property type="match status" value="1"/>
</dbReference>
<sequence length="216" mass="23063">MSELKIKAAKAAIAYIEDDMVIGVGTGSTVNFFIKELAAIKHKIEACVASSKATEALLRAEGIPVIDLNSVQDLPIYVDGADEVNERGEMIKGGGGALTREKIVANVATQFICIVDESKVVKRLGEFPVAVEVIPMARSFVARQIVKLGGDPEYREGFITDNGNIILDVFNLNFSTPMALEDSLNVIPGVVENGVFAKRLADKVLVASASGVNNLK</sequence>
<feature type="chain" id="PRO_0000158431" description="Ribose-5-phosphate isomerase A">
    <location>
        <begin position="1"/>
        <end position="216"/>
    </location>
</feature>
<feature type="active site" description="Proton acceptor" evidence="1">
    <location>
        <position position="101"/>
    </location>
</feature>
<feature type="binding site" evidence="1">
    <location>
        <begin position="26"/>
        <end position="29"/>
    </location>
    <ligand>
        <name>substrate</name>
    </ligand>
</feature>
<feature type="binding site" evidence="1">
    <location>
        <begin position="79"/>
        <end position="82"/>
    </location>
    <ligand>
        <name>substrate</name>
    </ligand>
</feature>
<feature type="binding site" evidence="1">
    <location>
        <begin position="92"/>
        <end position="95"/>
    </location>
    <ligand>
        <name>substrate</name>
    </ligand>
</feature>
<feature type="binding site" evidence="1">
    <location>
        <position position="119"/>
    </location>
    <ligand>
        <name>substrate</name>
    </ligand>
</feature>
<gene>
    <name evidence="1" type="primary">rpiA</name>
    <name type="ordered locus">lpl0093</name>
</gene>
<name>RPIA_LEGPL</name>
<reference key="1">
    <citation type="journal article" date="2004" name="Nat. Genet.">
        <title>Evidence in the Legionella pneumophila genome for exploitation of host cell functions and high genome plasticity.</title>
        <authorList>
            <person name="Cazalet C."/>
            <person name="Rusniok C."/>
            <person name="Brueggemann H."/>
            <person name="Zidane N."/>
            <person name="Magnier A."/>
            <person name="Ma L."/>
            <person name="Tichit M."/>
            <person name="Jarraud S."/>
            <person name="Bouchier C."/>
            <person name="Vandenesch F."/>
            <person name="Kunst F."/>
            <person name="Etienne J."/>
            <person name="Glaser P."/>
            <person name="Buchrieser C."/>
        </authorList>
    </citation>
    <scope>NUCLEOTIDE SEQUENCE [LARGE SCALE GENOMIC DNA]</scope>
    <source>
        <strain>Lens</strain>
    </source>
</reference>
<comment type="function">
    <text evidence="1">Catalyzes the reversible conversion of ribose-5-phosphate to ribulose 5-phosphate.</text>
</comment>
<comment type="catalytic activity">
    <reaction evidence="1">
        <text>aldehydo-D-ribose 5-phosphate = D-ribulose 5-phosphate</text>
        <dbReference type="Rhea" id="RHEA:14657"/>
        <dbReference type="ChEBI" id="CHEBI:58121"/>
        <dbReference type="ChEBI" id="CHEBI:58273"/>
        <dbReference type="EC" id="5.3.1.6"/>
    </reaction>
</comment>
<comment type="pathway">
    <text evidence="1">Carbohydrate degradation; pentose phosphate pathway; D-ribose 5-phosphate from D-ribulose 5-phosphate (non-oxidative stage): step 1/1.</text>
</comment>
<comment type="subunit">
    <text evidence="1">Homodimer.</text>
</comment>
<comment type="similarity">
    <text evidence="1">Belongs to the ribose 5-phosphate isomerase family.</text>
</comment>
<proteinExistence type="inferred from homology"/>
<keyword id="KW-0413">Isomerase</keyword>
<accession>Q5X0C7</accession>